<comment type="function">
    <text evidence="1">Essential for the production of a quorum sensing system signal molecule, the autoinducing peptide (AIP). This quorum sensing system is responsible for the regulation of the expression of virulence factor genes. Involved in the proteolytic processing of AgrD, the precursor of AIP.</text>
</comment>
<comment type="subcellular location">
    <subcellularLocation>
        <location evidence="1">Cell membrane</location>
        <topology evidence="1">Multi-pass membrane protein</topology>
    </subcellularLocation>
</comment>
<comment type="similarity">
    <text evidence="1">Belongs to the AgrB family.</text>
</comment>
<keyword id="KW-1003">Cell membrane</keyword>
<keyword id="KW-0378">Hydrolase</keyword>
<keyword id="KW-0472">Membrane</keyword>
<keyword id="KW-0645">Protease</keyword>
<keyword id="KW-0673">Quorum sensing</keyword>
<keyword id="KW-0812">Transmembrane</keyword>
<keyword id="KW-1133">Transmembrane helix</keyword>
<keyword id="KW-0843">Virulence</keyword>
<dbReference type="EC" id="3.4.-.-" evidence="1"/>
<dbReference type="EMBL" id="CP000703">
    <property type="protein sequence ID" value="ABQ49856.1"/>
    <property type="molecule type" value="Genomic_DNA"/>
</dbReference>
<dbReference type="RefSeq" id="WP_001105696.1">
    <property type="nucleotide sequence ID" value="NC_009487.1"/>
</dbReference>
<dbReference type="MEROPS" id="C75.001"/>
<dbReference type="KEGG" id="saj:SaurJH9_2073"/>
<dbReference type="HOGENOM" id="CLU_098969_2_2_9"/>
<dbReference type="GO" id="GO:0005886">
    <property type="term" value="C:plasma membrane"/>
    <property type="evidence" value="ECO:0007669"/>
    <property type="project" value="UniProtKB-SubCell"/>
</dbReference>
<dbReference type="GO" id="GO:0008233">
    <property type="term" value="F:peptidase activity"/>
    <property type="evidence" value="ECO:0007669"/>
    <property type="project" value="UniProtKB-UniRule"/>
</dbReference>
<dbReference type="GO" id="GO:0006508">
    <property type="term" value="P:proteolysis"/>
    <property type="evidence" value="ECO:0007669"/>
    <property type="project" value="UniProtKB-KW"/>
</dbReference>
<dbReference type="GO" id="GO:0009372">
    <property type="term" value="P:quorum sensing"/>
    <property type="evidence" value="ECO:0007669"/>
    <property type="project" value="UniProtKB-UniRule"/>
</dbReference>
<dbReference type="HAMAP" id="MF_00784">
    <property type="entry name" value="AgrB"/>
    <property type="match status" value="1"/>
</dbReference>
<dbReference type="InterPro" id="IPR006741">
    <property type="entry name" value="AgrB"/>
</dbReference>
<dbReference type="Pfam" id="PF04647">
    <property type="entry name" value="AgrB"/>
    <property type="match status" value="1"/>
</dbReference>
<dbReference type="SMART" id="SM00793">
    <property type="entry name" value="AgrB"/>
    <property type="match status" value="1"/>
</dbReference>
<evidence type="ECO:0000255" key="1">
    <source>
        <dbReference type="HAMAP-Rule" id="MF_00784"/>
    </source>
</evidence>
<reference key="1">
    <citation type="submission" date="2007-05" db="EMBL/GenBank/DDBJ databases">
        <title>Complete sequence of chromosome of Staphylococcus aureus subsp. aureus JH9.</title>
        <authorList>
            <consortium name="US DOE Joint Genome Institute"/>
            <person name="Copeland A."/>
            <person name="Lucas S."/>
            <person name="Lapidus A."/>
            <person name="Barry K."/>
            <person name="Detter J.C."/>
            <person name="Glavina del Rio T."/>
            <person name="Hammon N."/>
            <person name="Israni S."/>
            <person name="Pitluck S."/>
            <person name="Chain P."/>
            <person name="Malfatti S."/>
            <person name="Shin M."/>
            <person name="Vergez L."/>
            <person name="Schmutz J."/>
            <person name="Larimer F."/>
            <person name="Land M."/>
            <person name="Hauser L."/>
            <person name="Kyrpides N."/>
            <person name="Kim E."/>
            <person name="Tomasz A."/>
            <person name="Richardson P."/>
        </authorList>
    </citation>
    <scope>NUCLEOTIDE SEQUENCE [LARGE SCALE GENOMIC DNA]</scope>
    <source>
        <strain>JH9</strain>
    </source>
</reference>
<feature type="chain" id="PRO_1000083587" description="Accessory gene regulator protein B">
    <location>
        <begin position="1"/>
        <end position="187"/>
    </location>
</feature>
<feature type="transmembrane region" description="Helical" evidence="1">
    <location>
        <begin position="49"/>
        <end position="69"/>
    </location>
</feature>
<feature type="transmembrane region" description="Helical" evidence="1">
    <location>
        <begin position="82"/>
        <end position="102"/>
    </location>
</feature>
<feature type="transmembrane region" description="Helical" evidence="1">
    <location>
        <begin position="106"/>
        <end position="126"/>
    </location>
</feature>
<feature type="transmembrane region" description="Helical" evidence="1">
    <location>
        <begin position="144"/>
        <end position="164"/>
    </location>
</feature>
<feature type="transmembrane region" description="Helical" evidence="1">
    <location>
        <begin position="166"/>
        <end position="186"/>
    </location>
</feature>
<protein>
    <recommendedName>
        <fullName evidence="1">Accessory gene regulator protein B</fullName>
        <ecNumber evidence="1">3.4.-.-</ecNumber>
    </recommendedName>
</protein>
<gene>
    <name evidence="1" type="primary">agrB</name>
    <name type="ordered locus">SaurJH9_2073</name>
</gene>
<accession>A5IUI3</accession>
<organism>
    <name type="scientific">Staphylococcus aureus (strain JH9)</name>
    <dbReference type="NCBI Taxonomy" id="359786"/>
    <lineage>
        <taxon>Bacteria</taxon>
        <taxon>Bacillati</taxon>
        <taxon>Bacillota</taxon>
        <taxon>Bacilli</taxon>
        <taxon>Bacillales</taxon>
        <taxon>Staphylococcaceae</taxon>
        <taxon>Staphylococcus</taxon>
    </lineage>
</organism>
<proteinExistence type="inferred from homology"/>
<sequence>MNYFDNKIDQFATYLQKRNNLDHIQFLQVRLGMQIIVGNFFKILVTYSISIFLSVFLFTLVTHLSYMLIRYNAHGAHAKSSILCYIQSILTFVFVPYFLINIDINFTYLLALSIIGLISVVIYAPAATKKQPIPIKLVKRKKYLSIIMYLLVLILSLIIHPFYAQFMLLGILVESITLLPIFFPKED</sequence>
<name>AGRB_STAA9</name>